<comment type="function">
    <text evidence="1">FMRFamides and FMRFamide-like peptides are neuropeptides.</text>
</comment>
<comment type="subcellular location">
    <subcellularLocation>
        <location evidence="6">Secreted</location>
    </subcellularLocation>
</comment>
<comment type="similarity">
    <text evidence="2">Belongs to the FARP (FMRF amide related peptide) family.</text>
</comment>
<organism>
    <name type="scientific">Namaquaphasma ookiepense</name>
    <name type="common">Gladiator bug</name>
    <dbReference type="NCBI Taxonomy" id="409167"/>
    <lineage>
        <taxon>Eukaryota</taxon>
        <taxon>Metazoa</taxon>
        <taxon>Ecdysozoa</taxon>
        <taxon>Arthropoda</taxon>
        <taxon>Hexapoda</taxon>
        <taxon>Insecta</taxon>
        <taxon>Pterygota</taxon>
        <taxon>Neoptera</taxon>
        <taxon>Polyneoptera</taxon>
        <taxon>Mantophasmatodea</taxon>
        <taxon>Austrophasmatidae</taxon>
        <taxon>Namaquaphasma</taxon>
    </lineage>
</organism>
<feature type="peptide" id="PRO_0000420499" description="Extended FMRFamide-4">
    <location>
        <begin position="1"/>
        <end position="9"/>
    </location>
</feature>
<feature type="modified residue" description="Leucine amide" evidence="3">
    <location>
        <position position="9"/>
    </location>
</feature>
<feature type="unsure residue" description="L or I" evidence="3">
    <location>
        <position position="7"/>
    </location>
</feature>
<feature type="unsure residue" description="L or I" evidence="3">
    <location>
        <position position="9"/>
    </location>
</feature>
<accession>B0M2T4</accession>
<evidence type="ECO:0000250" key="1">
    <source>
        <dbReference type="UniProtKB" id="P34405"/>
    </source>
</evidence>
<evidence type="ECO:0000255" key="2"/>
<evidence type="ECO:0000269" key="3">
    <source>
    </source>
</evidence>
<evidence type="ECO:0000303" key="4">
    <source>
    </source>
</evidence>
<evidence type="ECO:0000305" key="5"/>
<evidence type="ECO:0000305" key="6">
    <source>
    </source>
</evidence>
<dbReference type="GO" id="GO:0005576">
    <property type="term" value="C:extracellular region"/>
    <property type="evidence" value="ECO:0007669"/>
    <property type="project" value="UniProtKB-SubCell"/>
</dbReference>
<dbReference type="GO" id="GO:0007218">
    <property type="term" value="P:neuropeptide signaling pathway"/>
    <property type="evidence" value="ECO:0007669"/>
    <property type="project" value="UniProtKB-KW"/>
</dbReference>
<protein>
    <recommendedName>
        <fullName>Extended FMRFamide-4</fullName>
        <shortName evidence="4">FMRFa-4</shortName>
    </recommendedName>
</protein>
<proteinExistence type="evidence at protein level"/>
<sequence length="9" mass="993">GVDSSFLRL</sequence>
<name>FAR4_NAMOO</name>
<reference evidence="5" key="1">
    <citation type="journal article" date="2012" name="Syst. Biol.">
        <title>Peptidomics-based phylogeny and biogeography of Mantophasmatodea (Hexapoda).</title>
        <authorList>
            <person name="Predel R."/>
            <person name="Neupert S."/>
            <person name="Huetteroth W."/>
            <person name="Kahnt J."/>
            <person name="Waidelich D."/>
            <person name="Roth S."/>
        </authorList>
    </citation>
    <scope>PROTEIN SEQUENCE</scope>
    <scope>AMIDATION AT LEU-9</scope>
    <source>
        <tissue evidence="3">Thoracic perisympathetic organs</tissue>
    </source>
</reference>
<keyword id="KW-0027">Amidation</keyword>
<keyword id="KW-0903">Direct protein sequencing</keyword>
<keyword id="KW-0527">Neuropeptide</keyword>
<keyword id="KW-0964">Secreted</keyword>